<organism>
    <name type="scientific">Prochlorococcus marinus (strain SARG / CCMP1375 / SS120)</name>
    <dbReference type="NCBI Taxonomy" id="167539"/>
    <lineage>
        <taxon>Bacteria</taxon>
        <taxon>Bacillati</taxon>
        <taxon>Cyanobacteriota</taxon>
        <taxon>Cyanophyceae</taxon>
        <taxon>Synechococcales</taxon>
        <taxon>Prochlorococcaceae</taxon>
        <taxon>Prochlorococcus</taxon>
    </lineage>
</organism>
<dbReference type="EC" id="2.7.1.39" evidence="1"/>
<dbReference type="EMBL" id="AE017126">
    <property type="protein sequence ID" value="AAQ00111.1"/>
    <property type="molecule type" value="Genomic_DNA"/>
</dbReference>
<dbReference type="RefSeq" id="NP_875458.1">
    <property type="nucleotide sequence ID" value="NC_005042.1"/>
</dbReference>
<dbReference type="RefSeq" id="WP_011125218.1">
    <property type="nucleotide sequence ID" value="NC_005042.1"/>
</dbReference>
<dbReference type="SMR" id="Q7VBM6"/>
<dbReference type="STRING" id="167539.Pro_1066"/>
<dbReference type="EnsemblBacteria" id="AAQ00111">
    <property type="protein sequence ID" value="AAQ00111"/>
    <property type="gene ID" value="Pro_1066"/>
</dbReference>
<dbReference type="KEGG" id="pma:Pro_1066"/>
<dbReference type="PATRIC" id="fig|167539.5.peg.1116"/>
<dbReference type="eggNOG" id="COG0083">
    <property type="taxonomic scope" value="Bacteria"/>
</dbReference>
<dbReference type="HOGENOM" id="CLU_041243_0_2_3"/>
<dbReference type="OrthoDB" id="9769912at2"/>
<dbReference type="UniPathway" id="UPA00050">
    <property type="reaction ID" value="UER00064"/>
</dbReference>
<dbReference type="Proteomes" id="UP000001420">
    <property type="component" value="Chromosome"/>
</dbReference>
<dbReference type="GO" id="GO:0005737">
    <property type="term" value="C:cytoplasm"/>
    <property type="evidence" value="ECO:0007669"/>
    <property type="project" value="UniProtKB-SubCell"/>
</dbReference>
<dbReference type="GO" id="GO:0005524">
    <property type="term" value="F:ATP binding"/>
    <property type="evidence" value="ECO:0007669"/>
    <property type="project" value="UniProtKB-UniRule"/>
</dbReference>
<dbReference type="GO" id="GO:0004413">
    <property type="term" value="F:homoserine kinase activity"/>
    <property type="evidence" value="ECO:0007669"/>
    <property type="project" value="UniProtKB-UniRule"/>
</dbReference>
<dbReference type="GO" id="GO:0009088">
    <property type="term" value="P:threonine biosynthetic process"/>
    <property type="evidence" value="ECO:0007669"/>
    <property type="project" value="UniProtKB-UniRule"/>
</dbReference>
<dbReference type="Gene3D" id="3.30.230.10">
    <property type="match status" value="1"/>
</dbReference>
<dbReference type="Gene3D" id="3.30.70.890">
    <property type="entry name" value="GHMP kinase, C-terminal domain"/>
    <property type="match status" value="1"/>
</dbReference>
<dbReference type="HAMAP" id="MF_00384">
    <property type="entry name" value="Homoser_kinase"/>
    <property type="match status" value="1"/>
</dbReference>
<dbReference type="InterPro" id="IPR013750">
    <property type="entry name" value="GHMP_kinase_C_dom"/>
</dbReference>
<dbReference type="InterPro" id="IPR036554">
    <property type="entry name" value="GHMP_kinase_C_sf"/>
</dbReference>
<dbReference type="InterPro" id="IPR006204">
    <property type="entry name" value="GHMP_kinase_N_dom"/>
</dbReference>
<dbReference type="InterPro" id="IPR006203">
    <property type="entry name" value="GHMP_knse_ATP-bd_CS"/>
</dbReference>
<dbReference type="InterPro" id="IPR000870">
    <property type="entry name" value="Homoserine_kinase"/>
</dbReference>
<dbReference type="InterPro" id="IPR020568">
    <property type="entry name" value="Ribosomal_Su5_D2-typ_SF"/>
</dbReference>
<dbReference type="InterPro" id="IPR014721">
    <property type="entry name" value="Ribsml_uS5_D2-typ_fold_subgr"/>
</dbReference>
<dbReference type="NCBIfam" id="NF002288">
    <property type="entry name" value="PRK01212.1-4"/>
    <property type="match status" value="1"/>
</dbReference>
<dbReference type="NCBIfam" id="TIGR00191">
    <property type="entry name" value="thrB"/>
    <property type="match status" value="1"/>
</dbReference>
<dbReference type="PANTHER" id="PTHR20861:SF1">
    <property type="entry name" value="HOMOSERINE KINASE"/>
    <property type="match status" value="1"/>
</dbReference>
<dbReference type="PANTHER" id="PTHR20861">
    <property type="entry name" value="HOMOSERINE/4-DIPHOSPHOCYTIDYL-2-C-METHYL-D-ERYTHRITOL KINASE"/>
    <property type="match status" value="1"/>
</dbReference>
<dbReference type="Pfam" id="PF08544">
    <property type="entry name" value="GHMP_kinases_C"/>
    <property type="match status" value="1"/>
</dbReference>
<dbReference type="Pfam" id="PF00288">
    <property type="entry name" value="GHMP_kinases_N"/>
    <property type="match status" value="1"/>
</dbReference>
<dbReference type="PIRSF" id="PIRSF000676">
    <property type="entry name" value="Homoser_kin"/>
    <property type="match status" value="1"/>
</dbReference>
<dbReference type="PRINTS" id="PR00958">
    <property type="entry name" value="HOMSERKINASE"/>
</dbReference>
<dbReference type="SUPFAM" id="SSF55060">
    <property type="entry name" value="GHMP Kinase, C-terminal domain"/>
    <property type="match status" value="1"/>
</dbReference>
<dbReference type="SUPFAM" id="SSF54211">
    <property type="entry name" value="Ribosomal protein S5 domain 2-like"/>
    <property type="match status" value="1"/>
</dbReference>
<dbReference type="PROSITE" id="PS00627">
    <property type="entry name" value="GHMP_KINASES_ATP"/>
    <property type="match status" value="1"/>
</dbReference>
<sequence length="315" mass="33707">MIQPPIGKKVLVEVPSTTANLGPGFDCLGAALSLTNFFTIKRIDGDSERFELIMESTEGNHLRGGPENLFYRAAQRVWKAAEVEPFALEARVKLAVPPARGLGSSATAIVAGLVGANALINDPLSKEKLLELAIDIEGHPDNVVPSLLGGLCFTAKAASQRWRVVKCDWDDSIKAVVAIPSLRLSTSEARRVMPKTVPLGDAVMNLGSLTLLLNGLRTGRQDLITDGMHDRLHEPYRWKLIKGGAQVCEAAINAGAFGCAISGAGPSILALCKEDKGRNISQAMVKAWESEGVASRAPLLNLQTKGSTWYSNQSK</sequence>
<feature type="chain" id="PRO_0000156597" description="Homoserine kinase">
    <location>
        <begin position="1"/>
        <end position="315"/>
    </location>
</feature>
<feature type="binding site" evidence="1">
    <location>
        <begin position="97"/>
        <end position="107"/>
    </location>
    <ligand>
        <name>ATP</name>
        <dbReference type="ChEBI" id="CHEBI:30616"/>
    </ligand>
</feature>
<keyword id="KW-0028">Amino-acid biosynthesis</keyword>
<keyword id="KW-0067">ATP-binding</keyword>
<keyword id="KW-0963">Cytoplasm</keyword>
<keyword id="KW-0418">Kinase</keyword>
<keyword id="KW-0547">Nucleotide-binding</keyword>
<keyword id="KW-1185">Reference proteome</keyword>
<keyword id="KW-0791">Threonine biosynthesis</keyword>
<keyword id="KW-0808">Transferase</keyword>
<protein>
    <recommendedName>
        <fullName evidence="1">Homoserine kinase</fullName>
        <shortName evidence="1">HK</shortName>
        <shortName evidence="1">HSK</shortName>
        <ecNumber evidence="1">2.7.1.39</ecNumber>
    </recommendedName>
</protein>
<evidence type="ECO:0000255" key="1">
    <source>
        <dbReference type="HAMAP-Rule" id="MF_00384"/>
    </source>
</evidence>
<name>KHSE_PROMA</name>
<reference key="1">
    <citation type="journal article" date="2003" name="Proc. Natl. Acad. Sci. U.S.A.">
        <title>Genome sequence of the cyanobacterium Prochlorococcus marinus SS120, a nearly minimal oxyphototrophic genome.</title>
        <authorList>
            <person name="Dufresne A."/>
            <person name="Salanoubat M."/>
            <person name="Partensky F."/>
            <person name="Artiguenave F."/>
            <person name="Axmann I.M."/>
            <person name="Barbe V."/>
            <person name="Duprat S."/>
            <person name="Galperin M.Y."/>
            <person name="Koonin E.V."/>
            <person name="Le Gall F."/>
            <person name="Makarova K.S."/>
            <person name="Ostrowski M."/>
            <person name="Oztas S."/>
            <person name="Robert C."/>
            <person name="Rogozin I.B."/>
            <person name="Scanlan D.J."/>
            <person name="Tandeau de Marsac N."/>
            <person name="Weissenbach J."/>
            <person name="Wincker P."/>
            <person name="Wolf Y.I."/>
            <person name="Hess W.R."/>
        </authorList>
    </citation>
    <scope>NUCLEOTIDE SEQUENCE [LARGE SCALE GENOMIC DNA]</scope>
    <source>
        <strain>SARG / CCMP1375 / SS120</strain>
    </source>
</reference>
<accession>Q7VBM6</accession>
<comment type="function">
    <text evidence="1">Catalyzes the ATP-dependent phosphorylation of L-homoserine to L-homoserine phosphate.</text>
</comment>
<comment type="catalytic activity">
    <reaction evidence="1">
        <text>L-homoserine + ATP = O-phospho-L-homoserine + ADP + H(+)</text>
        <dbReference type="Rhea" id="RHEA:13985"/>
        <dbReference type="ChEBI" id="CHEBI:15378"/>
        <dbReference type="ChEBI" id="CHEBI:30616"/>
        <dbReference type="ChEBI" id="CHEBI:57476"/>
        <dbReference type="ChEBI" id="CHEBI:57590"/>
        <dbReference type="ChEBI" id="CHEBI:456216"/>
        <dbReference type="EC" id="2.7.1.39"/>
    </reaction>
</comment>
<comment type="pathway">
    <text evidence="1">Amino-acid biosynthesis; L-threonine biosynthesis; L-threonine from L-aspartate: step 4/5.</text>
</comment>
<comment type="subcellular location">
    <subcellularLocation>
        <location evidence="1">Cytoplasm</location>
    </subcellularLocation>
</comment>
<comment type="similarity">
    <text evidence="1">Belongs to the GHMP kinase family. Homoserine kinase subfamily.</text>
</comment>
<proteinExistence type="inferred from homology"/>
<gene>
    <name evidence="1" type="primary">thrB</name>
    <name type="ordered locus">Pro_1066</name>
</gene>